<gene>
    <name evidence="1" type="primary">purC</name>
    <name type="ordered locus">SPH_0150</name>
</gene>
<comment type="catalytic activity">
    <reaction evidence="1">
        <text>5-amino-1-(5-phospho-D-ribosyl)imidazole-4-carboxylate + L-aspartate + ATP = (2S)-2-[5-amino-1-(5-phospho-beta-D-ribosyl)imidazole-4-carboxamido]succinate + ADP + phosphate + 2 H(+)</text>
        <dbReference type="Rhea" id="RHEA:22628"/>
        <dbReference type="ChEBI" id="CHEBI:15378"/>
        <dbReference type="ChEBI" id="CHEBI:29991"/>
        <dbReference type="ChEBI" id="CHEBI:30616"/>
        <dbReference type="ChEBI" id="CHEBI:43474"/>
        <dbReference type="ChEBI" id="CHEBI:58443"/>
        <dbReference type="ChEBI" id="CHEBI:77657"/>
        <dbReference type="ChEBI" id="CHEBI:456216"/>
        <dbReference type="EC" id="6.3.2.6"/>
    </reaction>
</comment>
<comment type="pathway">
    <text evidence="1">Purine metabolism; IMP biosynthesis via de novo pathway; 5-amino-1-(5-phospho-D-ribosyl)imidazole-4-carboxamide from 5-amino-1-(5-phospho-D-ribosyl)imidazole-4-carboxylate: step 1/2.</text>
</comment>
<comment type="similarity">
    <text evidence="1">Belongs to the SAICAR synthetase family.</text>
</comment>
<proteinExistence type="inferred from homology"/>
<accession>B1I7V1</accession>
<sequence>MSKQLIYSGKAKDIYTTEDENLIISTYKDQATAFNGVKKEQIAGKGVLNNQISSFIFEKLNAAGVATHFVEKLSDTEQLNKKVKIIPLEVVLRNYTAGSFSKRFGVDEGIALETPIVEFYYKNDDLDDPFINDEHVKFLQIADDQQIAYLKEETRRINELLKVWFAEIGLKLIDFKLEFGFDKDGKIILADEFSPDNCRLWDADGNHMDKDVFRRGLGELTDVYEIVWEKLQELK</sequence>
<keyword id="KW-0067">ATP-binding</keyword>
<keyword id="KW-0436">Ligase</keyword>
<keyword id="KW-0547">Nucleotide-binding</keyword>
<keyword id="KW-0658">Purine biosynthesis</keyword>
<protein>
    <recommendedName>
        <fullName evidence="1">Phosphoribosylaminoimidazole-succinocarboxamide synthase</fullName>
        <ecNumber evidence="1">6.3.2.6</ecNumber>
    </recommendedName>
    <alternativeName>
        <fullName evidence="1">SAICAR synthetase</fullName>
    </alternativeName>
</protein>
<dbReference type="EC" id="6.3.2.6" evidence="1"/>
<dbReference type="EMBL" id="CP000936">
    <property type="protein sequence ID" value="ACA37010.1"/>
    <property type="molecule type" value="Genomic_DNA"/>
</dbReference>
<dbReference type="RefSeq" id="WP_000043300.1">
    <property type="nucleotide sequence ID" value="NC_010380.1"/>
</dbReference>
<dbReference type="SMR" id="B1I7V1"/>
<dbReference type="GeneID" id="45652446"/>
<dbReference type="KEGG" id="spv:SPH_0150"/>
<dbReference type="HOGENOM" id="CLU_061495_2_0_9"/>
<dbReference type="UniPathway" id="UPA00074">
    <property type="reaction ID" value="UER00131"/>
</dbReference>
<dbReference type="Proteomes" id="UP000002163">
    <property type="component" value="Chromosome"/>
</dbReference>
<dbReference type="GO" id="GO:0005524">
    <property type="term" value="F:ATP binding"/>
    <property type="evidence" value="ECO:0007669"/>
    <property type="project" value="UniProtKB-KW"/>
</dbReference>
<dbReference type="GO" id="GO:0004639">
    <property type="term" value="F:phosphoribosylaminoimidazolesuccinocarboxamide synthase activity"/>
    <property type="evidence" value="ECO:0007669"/>
    <property type="project" value="UniProtKB-UniRule"/>
</dbReference>
<dbReference type="GO" id="GO:0006189">
    <property type="term" value="P:'de novo' IMP biosynthetic process"/>
    <property type="evidence" value="ECO:0007669"/>
    <property type="project" value="UniProtKB-UniRule"/>
</dbReference>
<dbReference type="GO" id="GO:0009236">
    <property type="term" value="P:cobalamin biosynthetic process"/>
    <property type="evidence" value="ECO:0007669"/>
    <property type="project" value="InterPro"/>
</dbReference>
<dbReference type="CDD" id="cd01415">
    <property type="entry name" value="SAICAR_synt_PurC"/>
    <property type="match status" value="1"/>
</dbReference>
<dbReference type="FunFam" id="3.30.200.20:FF:000189">
    <property type="entry name" value="Phosphoribosylaminoimidazole-succinocarboxamide synthase"/>
    <property type="match status" value="1"/>
</dbReference>
<dbReference type="FunFam" id="3.30.470.20:FF:000006">
    <property type="entry name" value="Phosphoribosylaminoimidazole-succinocarboxamide synthase"/>
    <property type="match status" value="1"/>
</dbReference>
<dbReference type="Gene3D" id="3.30.470.20">
    <property type="entry name" value="ATP-grasp fold, B domain"/>
    <property type="match status" value="1"/>
</dbReference>
<dbReference type="Gene3D" id="3.30.200.20">
    <property type="entry name" value="Phosphorylase Kinase, domain 1"/>
    <property type="match status" value="1"/>
</dbReference>
<dbReference type="HAMAP" id="MF_00137">
    <property type="entry name" value="SAICAR_synth"/>
    <property type="match status" value="1"/>
</dbReference>
<dbReference type="InterPro" id="IPR028923">
    <property type="entry name" value="SAICAR_synt/ADE2_N"/>
</dbReference>
<dbReference type="InterPro" id="IPR033934">
    <property type="entry name" value="SAICAR_synt_PurC"/>
</dbReference>
<dbReference type="InterPro" id="IPR001636">
    <property type="entry name" value="SAICAR_synth"/>
</dbReference>
<dbReference type="InterPro" id="IPR050089">
    <property type="entry name" value="SAICAR_synthetase"/>
</dbReference>
<dbReference type="InterPro" id="IPR018236">
    <property type="entry name" value="SAICAR_synthetase_CS"/>
</dbReference>
<dbReference type="NCBIfam" id="TIGR00081">
    <property type="entry name" value="purC"/>
    <property type="match status" value="1"/>
</dbReference>
<dbReference type="PANTHER" id="PTHR43599">
    <property type="entry name" value="MULTIFUNCTIONAL PROTEIN ADE2"/>
    <property type="match status" value="1"/>
</dbReference>
<dbReference type="PANTHER" id="PTHR43599:SF3">
    <property type="entry name" value="SI:DKEY-6E2.2"/>
    <property type="match status" value="1"/>
</dbReference>
<dbReference type="Pfam" id="PF01259">
    <property type="entry name" value="SAICAR_synt"/>
    <property type="match status" value="1"/>
</dbReference>
<dbReference type="SUPFAM" id="SSF56104">
    <property type="entry name" value="SAICAR synthase-like"/>
    <property type="match status" value="1"/>
</dbReference>
<dbReference type="PROSITE" id="PS01057">
    <property type="entry name" value="SAICAR_SYNTHETASE_1"/>
    <property type="match status" value="1"/>
</dbReference>
<dbReference type="PROSITE" id="PS01058">
    <property type="entry name" value="SAICAR_SYNTHETASE_2"/>
    <property type="match status" value="1"/>
</dbReference>
<organism>
    <name type="scientific">Streptococcus pneumoniae (strain Hungary19A-6)</name>
    <dbReference type="NCBI Taxonomy" id="487214"/>
    <lineage>
        <taxon>Bacteria</taxon>
        <taxon>Bacillati</taxon>
        <taxon>Bacillota</taxon>
        <taxon>Bacilli</taxon>
        <taxon>Lactobacillales</taxon>
        <taxon>Streptococcaceae</taxon>
        <taxon>Streptococcus</taxon>
    </lineage>
</organism>
<reference key="1">
    <citation type="journal article" date="2010" name="Genome Biol.">
        <title>Structure and dynamics of the pan-genome of Streptococcus pneumoniae and closely related species.</title>
        <authorList>
            <person name="Donati C."/>
            <person name="Hiller N.L."/>
            <person name="Tettelin H."/>
            <person name="Muzzi A."/>
            <person name="Croucher N.J."/>
            <person name="Angiuoli S.V."/>
            <person name="Oggioni M."/>
            <person name="Dunning Hotopp J.C."/>
            <person name="Hu F.Z."/>
            <person name="Riley D.R."/>
            <person name="Covacci A."/>
            <person name="Mitchell T.J."/>
            <person name="Bentley S.D."/>
            <person name="Kilian M."/>
            <person name="Ehrlich G.D."/>
            <person name="Rappuoli R."/>
            <person name="Moxon E.R."/>
            <person name="Masignani V."/>
        </authorList>
    </citation>
    <scope>NUCLEOTIDE SEQUENCE [LARGE SCALE GENOMIC DNA]</scope>
    <source>
        <strain>Hungary19A-6</strain>
    </source>
</reference>
<name>PUR7_STRPI</name>
<feature type="chain" id="PRO_1000096021" description="Phosphoribosylaminoimidazole-succinocarboxamide synthase">
    <location>
        <begin position="1"/>
        <end position="235"/>
    </location>
</feature>
<evidence type="ECO:0000255" key="1">
    <source>
        <dbReference type="HAMAP-Rule" id="MF_00137"/>
    </source>
</evidence>